<keyword id="KW-1185">Reference proteome</keyword>
<keyword id="KW-0686">Riboflavin biosynthesis</keyword>
<keyword id="KW-0808">Transferase</keyword>
<reference key="1">
    <citation type="journal article" date="2002" name="Environ. Microbiol.">
        <title>Complete genome sequence and comparative analysis of the metabolically versatile Pseudomonas putida KT2440.</title>
        <authorList>
            <person name="Nelson K.E."/>
            <person name="Weinel C."/>
            <person name="Paulsen I.T."/>
            <person name="Dodson R.J."/>
            <person name="Hilbert H."/>
            <person name="Martins dos Santos V.A.P."/>
            <person name="Fouts D.E."/>
            <person name="Gill S.R."/>
            <person name="Pop M."/>
            <person name="Holmes M."/>
            <person name="Brinkac L.M."/>
            <person name="Beanan M.J."/>
            <person name="DeBoy R.T."/>
            <person name="Daugherty S.C."/>
            <person name="Kolonay J.F."/>
            <person name="Madupu R."/>
            <person name="Nelson W.C."/>
            <person name="White O."/>
            <person name="Peterson J.D."/>
            <person name="Khouri H.M."/>
            <person name="Hance I."/>
            <person name="Chris Lee P."/>
            <person name="Holtzapple E.K."/>
            <person name="Scanlan D."/>
            <person name="Tran K."/>
            <person name="Moazzez A."/>
            <person name="Utterback T.R."/>
            <person name="Rizzo M."/>
            <person name="Lee K."/>
            <person name="Kosack D."/>
            <person name="Moestl D."/>
            <person name="Wedler H."/>
            <person name="Lauber J."/>
            <person name="Stjepandic D."/>
            <person name="Hoheisel J."/>
            <person name="Straetz M."/>
            <person name="Heim S."/>
            <person name="Kiewitz C."/>
            <person name="Eisen J.A."/>
            <person name="Timmis K.N."/>
            <person name="Duesterhoeft A."/>
            <person name="Tuemmler B."/>
            <person name="Fraser C.M."/>
        </authorList>
    </citation>
    <scope>NUCLEOTIDE SEQUENCE [LARGE SCALE GENOMIC DNA]</scope>
    <source>
        <strain>ATCC 47054 / DSM 6125 / CFBP 8728 / NCIMB 11950 / KT2440</strain>
    </source>
</reference>
<name>RISB_PSEPK</name>
<protein>
    <recommendedName>
        <fullName evidence="1">6,7-dimethyl-8-ribityllumazine synthase</fullName>
        <shortName evidence="1">DMRL synthase</shortName>
        <shortName evidence="1">LS</shortName>
        <shortName evidence="1">Lumazine synthase</shortName>
        <ecNumber evidence="1">2.5.1.78</ecNumber>
    </recommendedName>
</protein>
<comment type="function">
    <text evidence="1">Catalyzes the formation of 6,7-dimethyl-8-ribityllumazine by condensation of 5-amino-6-(D-ribitylamino)uracil with 3,4-dihydroxy-2-butanone 4-phosphate. This is the penultimate step in the biosynthesis of riboflavin.</text>
</comment>
<comment type="catalytic activity">
    <reaction evidence="1">
        <text>(2S)-2-hydroxy-3-oxobutyl phosphate + 5-amino-6-(D-ribitylamino)uracil = 6,7-dimethyl-8-(1-D-ribityl)lumazine + phosphate + 2 H2O + H(+)</text>
        <dbReference type="Rhea" id="RHEA:26152"/>
        <dbReference type="ChEBI" id="CHEBI:15377"/>
        <dbReference type="ChEBI" id="CHEBI:15378"/>
        <dbReference type="ChEBI" id="CHEBI:15934"/>
        <dbReference type="ChEBI" id="CHEBI:43474"/>
        <dbReference type="ChEBI" id="CHEBI:58201"/>
        <dbReference type="ChEBI" id="CHEBI:58830"/>
        <dbReference type="EC" id="2.5.1.78"/>
    </reaction>
</comment>
<comment type="pathway">
    <text evidence="1">Cofactor biosynthesis; riboflavin biosynthesis; riboflavin from 2-hydroxy-3-oxobutyl phosphate and 5-amino-6-(D-ribitylamino)uracil: step 1/2.</text>
</comment>
<comment type="subunit">
    <text evidence="1">Forms an icosahedral capsid composed of 60 subunits, arranged as a dodecamer of pentamers.</text>
</comment>
<comment type="similarity">
    <text evidence="1">Belongs to the DMRL synthase family.</text>
</comment>
<evidence type="ECO:0000255" key="1">
    <source>
        <dbReference type="HAMAP-Rule" id="MF_00178"/>
    </source>
</evidence>
<feature type="chain" id="PRO_0000134788" description="6,7-dimethyl-8-ribityllumazine synthase">
    <location>
        <begin position="1"/>
        <end position="158"/>
    </location>
</feature>
<feature type="active site" description="Proton donor" evidence="1">
    <location>
        <position position="90"/>
    </location>
</feature>
<feature type="binding site" evidence="1">
    <location>
        <position position="24"/>
    </location>
    <ligand>
        <name>5-amino-6-(D-ribitylamino)uracil</name>
        <dbReference type="ChEBI" id="CHEBI:15934"/>
    </ligand>
</feature>
<feature type="binding site" evidence="1">
    <location>
        <begin position="58"/>
        <end position="60"/>
    </location>
    <ligand>
        <name>5-amino-6-(D-ribitylamino)uracil</name>
        <dbReference type="ChEBI" id="CHEBI:15934"/>
    </ligand>
</feature>
<feature type="binding site" evidence="1">
    <location>
        <begin position="82"/>
        <end position="84"/>
    </location>
    <ligand>
        <name>5-amino-6-(D-ribitylamino)uracil</name>
        <dbReference type="ChEBI" id="CHEBI:15934"/>
    </ligand>
</feature>
<feature type="binding site" evidence="1">
    <location>
        <begin position="87"/>
        <end position="88"/>
    </location>
    <ligand>
        <name>(2S)-2-hydroxy-3-oxobutyl phosphate</name>
        <dbReference type="ChEBI" id="CHEBI:58830"/>
    </ligand>
</feature>
<feature type="binding site" evidence="1">
    <location>
        <position position="115"/>
    </location>
    <ligand>
        <name>5-amino-6-(D-ribitylamino)uracil</name>
        <dbReference type="ChEBI" id="CHEBI:15934"/>
    </ligand>
</feature>
<feature type="binding site" evidence="1">
    <location>
        <position position="129"/>
    </location>
    <ligand>
        <name>(2S)-2-hydroxy-3-oxobutyl phosphate</name>
        <dbReference type="ChEBI" id="CHEBI:58830"/>
    </ligand>
</feature>
<organism>
    <name type="scientific">Pseudomonas putida (strain ATCC 47054 / DSM 6125 / CFBP 8728 / NCIMB 11950 / KT2440)</name>
    <dbReference type="NCBI Taxonomy" id="160488"/>
    <lineage>
        <taxon>Bacteria</taxon>
        <taxon>Pseudomonadati</taxon>
        <taxon>Pseudomonadota</taxon>
        <taxon>Gammaproteobacteria</taxon>
        <taxon>Pseudomonadales</taxon>
        <taxon>Pseudomonadaceae</taxon>
        <taxon>Pseudomonas</taxon>
    </lineage>
</organism>
<proteinExistence type="inferred from homology"/>
<accession>Q88QH6</accession>
<gene>
    <name evidence="1" type="primary">ribH</name>
    <name type="ordered locus">PP_0517</name>
</gene>
<sequence length="158" mass="16420">MTLKTIEGTFIAPKGRYALVVGRFNSFVVESLVSGAVDALVRHGVSESDITIIRAPGAFEIPLVAQKVAQQGAYDAIIALGAVIRGGTPHFEYVAGECTKGLAQVSMEFGVPVAFGVLTVDSIEQAIERSGTKAGNKGAEAALSALEMVSLLAQLEAK</sequence>
<dbReference type="EC" id="2.5.1.78" evidence="1"/>
<dbReference type="EMBL" id="AE015451">
    <property type="protein sequence ID" value="AAN66144.1"/>
    <property type="molecule type" value="Genomic_DNA"/>
</dbReference>
<dbReference type="RefSeq" id="NP_742680.1">
    <property type="nucleotide sequence ID" value="NC_002947.4"/>
</dbReference>
<dbReference type="SMR" id="Q88QH6"/>
<dbReference type="STRING" id="160488.PP_0517"/>
<dbReference type="PaxDb" id="160488-PP_0517"/>
<dbReference type="KEGG" id="ppu:PP_0517"/>
<dbReference type="PATRIC" id="fig|160488.4.peg.553"/>
<dbReference type="eggNOG" id="COG0054">
    <property type="taxonomic scope" value="Bacteria"/>
</dbReference>
<dbReference type="HOGENOM" id="CLU_089358_1_1_6"/>
<dbReference type="OrthoDB" id="9809709at2"/>
<dbReference type="PhylomeDB" id="Q88QH6"/>
<dbReference type="BioCyc" id="PPUT160488:G1G01-566-MONOMER"/>
<dbReference type="UniPathway" id="UPA00275">
    <property type="reaction ID" value="UER00404"/>
</dbReference>
<dbReference type="Proteomes" id="UP000000556">
    <property type="component" value="Chromosome"/>
</dbReference>
<dbReference type="GO" id="GO:0005829">
    <property type="term" value="C:cytosol"/>
    <property type="evidence" value="ECO:0007669"/>
    <property type="project" value="TreeGrafter"/>
</dbReference>
<dbReference type="GO" id="GO:0009349">
    <property type="term" value="C:riboflavin synthase complex"/>
    <property type="evidence" value="ECO:0007669"/>
    <property type="project" value="InterPro"/>
</dbReference>
<dbReference type="GO" id="GO:0000906">
    <property type="term" value="F:6,7-dimethyl-8-ribityllumazine synthase activity"/>
    <property type="evidence" value="ECO:0007669"/>
    <property type="project" value="UniProtKB-UniRule"/>
</dbReference>
<dbReference type="GO" id="GO:0009231">
    <property type="term" value="P:riboflavin biosynthetic process"/>
    <property type="evidence" value="ECO:0007669"/>
    <property type="project" value="UniProtKB-UniRule"/>
</dbReference>
<dbReference type="CDD" id="cd09209">
    <property type="entry name" value="Lumazine_synthase-I"/>
    <property type="match status" value="1"/>
</dbReference>
<dbReference type="FunFam" id="3.40.50.960:FF:000001">
    <property type="entry name" value="6,7-dimethyl-8-ribityllumazine synthase"/>
    <property type="match status" value="1"/>
</dbReference>
<dbReference type="Gene3D" id="3.40.50.960">
    <property type="entry name" value="Lumazine/riboflavin synthase"/>
    <property type="match status" value="1"/>
</dbReference>
<dbReference type="HAMAP" id="MF_00178">
    <property type="entry name" value="Lumazine_synth"/>
    <property type="match status" value="1"/>
</dbReference>
<dbReference type="InterPro" id="IPR034964">
    <property type="entry name" value="LS"/>
</dbReference>
<dbReference type="InterPro" id="IPR002180">
    <property type="entry name" value="LS/RS"/>
</dbReference>
<dbReference type="InterPro" id="IPR036467">
    <property type="entry name" value="LS/RS_sf"/>
</dbReference>
<dbReference type="NCBIfam" id="TIGR00114">
    <property type="entry name" value="lumazine-synth"/>
    <property type="match status" value="1"/>
</dbReference>
<dbReference type="NCBIfam" id="NF000812">
    <property type="entry name" value="PRK00061.1-4"/>
    <property type="match status" value="1"/>
</dbReference>
<dbReference type="PANTHER" id="PTHR21058:SF0">
    <property type="entry name" value="6,7-DIMETHYL-8-RIBITYLLUMAZINE SYNTHASE"/>
    <property type="match status" value="1"/>
</dbReference>
<dbReference type="PANTHER" id="PTHR21058">
    <property type="entry name" value="6,7-DIMETHYL-8-RIBITYLLUMAZINE SYNTHASE DMRL SYNTHASE LUMAZINE SYNTHASE"/>
    <property type="match status" value="1"/>
</dbReference>
<dbReference type="Pfam" id="PF00885">
    <property type="entry name" value="DMRL_synthase"/>
    <property type="match status" value="1"/>
</dbReference>
<dbReference type="SUPFAM" id="SSF52121">
    <property type="entry name" value="Lumazine synthase"/>
    <property type="match status" value="1"/>
</dbReference>